<name>PLOD1_CHICK</name>
<keyword id="KW-0223">Dioxygenase</keyword>
<keyword id="KW-0903">Direct protein sequencing</keyword>
<keyword id="KW-0256">Endoplasmic reticulum</keyword>
<keyword id="KW-0325">Glycoprotein</keyword>
<keyword id="KW-0408">Iron</keyword>
<keyword id="KW-0472">Membrane</keyword>
<keyword id="KW-0479">Metal-binding</keyword>
<keyword id="KW-0560">Oxidoreductase</keyword>
<keyword id="KW-1185">Reference proteome</keyword>
<keyword id="KW-0732">Signal</keyword>
<keyword id="KW-0847">Vitamin C</keyword>
<proteinExistence type="evidence at protein level"/>
<organism>
    <name type="scientific">Gallus gallus</name>
    <name type="common">Chicken</name>
    <dbReference type="NCBI Taxonomy" id="9031"/>
    <lineage>
        <taxon>Eukaryota</taxon>
        <taxon>Metazoa</taxon>
        <taxon>Chordata</taxon>
        <taxon>Craniata</taxon>
        <taxon>Vertebrata</taxon>
        <taxon>Euteleostomi</taxon>
        <taxon>Archelosauria</taxon>
        <taxon>Archosauria</taxon>
        <taxon>Dinosauria</taxon>
        <taxon>Saurischia</taxon>
        <taxon>Theropoda</taxon>
        <taxon>Coelurosauria</taxon>
        <taxon>Aves</taxon>
        <taxon>Neognathae</taxon>
        <taxon>Galloanserae</taxon>
        <taxon>Galliformes</taxon>
        <taxon>Phasianidae</taxon>
        <taxon>Phasianinae</taxon>
        <taxon>Gallus</taxon>
    </lineage>
</organism>
<sequence length="730" mass="84318">MVPPAVLLPWVVLPLLGVQGGSGSKQEENLLVLTVATKQTEGFRRFRRSAQFFNYKIQVLGLDEEWKGGDDKKPAGGGQKVRLLKSALKQHADKEDLVILFIESYDVLFASGPTELLKKFKQAKSKVVFSAENYIYPDRKLEAKYPPVRDGKRFLGSGGFIGYAPNLKKLVEEWKGKDDDSDQLFYTKIFLDPEKRENINISLDHRSRIFQNLNGALDEVVLKFENARVRARNLLYDTLPVIIHGNGPTKLQLNYLGNYIPQIWTFETGCTVCDEGLRSLTGIKDEALPMILIGIFIEQPTPFLSQFFLRLRNLHYPKQRIQIFIHNHEEHHSMQVDSFVKEHSKEYLAMKVIGPDDEVENAEARNLGMDLCRKDPDCDYYFSLDAEVVLKNTETLRILIEQNKSVIAPLVSRHEKLWSNFWGALSPDGYYARSEDYVDIVQRRRVGLWNVPYISSVYMVKGKVLRSELDEGDLFHGGKLDADMAFCHNVRNQGVFMYLTNRHQFGHILSLENYQTTHLHNDLWQIFSNPEDWREKYIHENYTAALKGKLVEMPCPDVYWFPIFTDTACDELVEEMEHYGKWSTGDNTDSRIQGGYENVPTIDIHMNQIGFEREWYKFLLDYIAPITEKLYPGYYTKTQFELAFVVRYKPDEQPSLMPHHDASTFTINIALNRVGIDYEGGGCRFLRYNCSIRAPRKGWTLMHPGRLTHYHEGLPTTKGTRYIAVSFIDP</sequence>
<feature type="signal peptide" evidence="3">
    <location>
        <begin position="1"/>
        <end position="20"/>
    </location>
</feature>
<feature type="chain" id="PRO_0000024682" description="Procollagen-lysine,2-oxoglutarate 5-dioxygenase 1">
    <location>
        <begin position="21"/>
        <end position="730"/>
    </location>
</feature>
<feature type="domain" description="Fe2OG dioxygenase" evidence="2">
    <location>
        <begin position="639"/>
        <end position="730"/>
    </location>
</feature>
<feature type="active site" evidence="1">
    <location>
        <position position="721"/>
    </location>
</feature>
<feature type="binding site" evidence="2">
    <location>
        <position position="659"/>
    </location>
    <ligand>
        <name>Fe cation</name>
        <dbReference type="ChEBI" id="CHEBI:24875"/>
    </ligand>
</feature>
<feature type="binding site" evidence="2">
    <location>
        <position position="661"/>
    </location>
    <ligand>
        <name>Fe cation</name>
        <dbReference type="ChEBI" id="CHEBI:24875"/>
    </ligand>
</feature>
<feature type="binding site" evidence="2">
    <location>
        <position position="711"/>
    </location>
    <ligand>
        <name>Fe cation</name>
        <dbReference type="ChEBI" id="CHEBI:24875"/>
    </ligand>
</feature>
<feature type="glycosylation site" description="N-linked (GlcNAc...) asparagine" evidence="1">
    <location>
        <position position="200"/>
    </location>
</feature>
<feature type="glycosylation site" description="N-linked (GlcNAc...) asparagine" evidence="1">
    <location>
        <position position="403"/>
    </location>
</feature>
<feature type="glycosylation site" description="N-linked (GlcNAc...) asparagine" evidence="1">
    <location>
        <position position="541"/>
    </location>
</feature>
<feature type="glycosylation site" description="N-linked (GlcNAc...) asparagine" evidence="1">
    <location>
        <position position="689"/>
    </location>
</feature>
<gene>
    <name type="primary">PLOD1</name>
    <name type="synonym">PLOD</name>
</gene>
<comment type="function">
    <text evidence="5">Forms hydroxylysine residues in -Xaa-Lys-Gly- sequences in collagens. These hydroxylysines serve as sites of attachment for carbohydrate units and are essential for the stability of the intermolecular collagen cross-links.</text>
</comment>
<comment type="catalytic activity">
    <reaction evidence="4 5">
        <text>L-lysyl-[collagen] + 2-oxoglutarate + O2 = (5R)-5-hydroxy-L-lysyl-[collagen] + succinate + CO2</text>
        <dbReference type="Rhea" id="RHEA:16569"/>
        <dbReference type="Rhea" id="RHEA-COMP:12751"/>
        <dbReference type="Rhea" id="RHEA-COMP:12752"/>
        <dbReference type="ChEBI" id="CHEBI:15379"/>
        <dbReference type="ChEBI" id="CHEBI:16526"/>
        <dbReference type="ChEBI" id="CHEBI:16810"/>
        <dbReference type="ChEBI" id="CHEBI:29969"/>
        <dbReference type="ChEBI" id="CHEBI:30031"/>
        <dbReference type="ChEBI" id="CHEBI:133442"/>
        <dbReference type="EC" id="1.14.11.4"/>
    </reaction>
</comment>
<comment type="cofactor">
    <cofactor evidence="4">
        <name>Fe(2+)</name>
        <dbReference type="ChEBI" id="CHEBI:29033"/>
    </cofactor>
</comment>
<comment type="cofactor">
    <cofactor evidence="4">
        <name>L-ascorbate</name>
        <dbReference type="ChEBI" id="CHEBI:38290"/>
    </cofactor>
</comment>
<comment type="biophysicochemical properties">
    <kinetics>
        <KM evidence="4">90 uM for 2-oxoglutarate</KM>
        <KM evidence="4">40 uM for O(2)</KM>
        <KM evidence="4">190 uM for ascorbate</KM>
        <KM evidence="4">400 uM for peptide substrate</KM>
    </kinetics>
</comment>
<comment type="subunit">
    <text evidence="5">Homodimer.</text>
</comment>
<comment type="subcellular location">
    <subcellularLocation>
        <location>Rough endoplasmic reticulum membrane</location>
        <topology>Peripheral membrane protein</topology>
        <orientation>Lumenal side</orientation>
    </subcellularLocation>
</comment>
<reference key="1">
    <citation type="journal article" date="1991" name="J. Biol. Chem.">
        <title>Molecular cloning of chick lysyl hydroxylase. Little homology in primary structure to the two types of subunit of prolyl 4-hydroxylase.</title>
        <authorList>
            <person name="Kivirikko K.I."/>
            <person name="Turpeenniemi-Hujanen T."/>
            <person name="Pajunen L."/>
            <person name="Pihlajaniemi T."/>
            <person name="Myllylae R."/>
        </authorList>
    </citation>
    <scope>NUCLEOTIDE SEQUENCE [MRNA]</scope>
    <scope>PROTEIN SEQUENCE OF 21-40; 412-417; 508-515 AND 550-573</scope>
</reference>
<reference key="2">
    <citation type="journal article" date="1980" name="Biochem. J.">
        <title>Isolation of lysyl hydroxylase, an enzyme of collagen synthesis, from chick embryos as a homogeneous protein.</title>
        <authorList>
            <person name="Turpeenniemi-Hujanen T.M."/>
            <person name="Puistola U."/>
            <person name="Kivirikko K.I."/>
        </authorList>
    </citation>
    <scope>FUNCTION</scope>
    <scope>CATALYTIC ACTIVITY</scope>
    <scope>SUBUNIT</scope>
</reference>
<reference key="3">
    <citation type="journal article" date="1980" name="Biochim. Biophys. Acta">
        <title>Studies on the lysyl hydroxylase reaction. I. Initial velocity kinetics and related aspects.</title>
        <authorList>
            <person name="Puistola U."/>
            <person name="Turpeenniemi-Hujanen T.M."/>
            <person name="Myllylae R."/>
            <person name="Kivirikko K.I."/>
        </authorList>
    </citation>
    <scope>CATALYTIC ACTIVITY</scope>
    <scope>COFACTOR</scope>
    <scope>ENZYME KINETICS</scope>
    <scope>BIOPHYSICOCHEMICAL PROPERTIES</scope>
</reference>
<accession>P24802</accession>
<evidence type="ECO:0000255" key="1"/>
<evidence type="ECO:0000255" key="2">
    <source>
        <dbReference type="PROSITE-ProRule" id="PRU00805"/>
    </source>
</evidence>
<evidence type="ECO:0000269" key="3">
    <source>
    </source>
</evidence>
<evidence type="ECO:0000269" key="4">
    <source>
    </source>
</evidence>
<evidence type="ECO:0000269" key="5">
    <source>
    </source>
</evidence>
<protein>
    <recommendedName>
        <fullName>Procollagen-lysine,2-oxoglutarate 5-dioxygenase 1</fullName>
        <ecNumber evidence="4 5">1.14.11.4</ecNumber>
    </recommendedName>
    <alternativeName>
        <fullName>Lysyl hydroxylase 1</fullName>
        <shortName>LH1</shortName>
    </alternativeName>
</protein>
<dbReference type="EC" id="1.14.11.4" evidence="4 5"/>
<dbReference type="EMBL" id="M59183">
    <property type="protein sequence ID" value="AAA48945.1"/>
    <property type="molecule type" value="mRNA"/>
</dbReference>
<dbReference type="PIR" id="A23742">
    <property type="entry name" value="A23742"/>
</dbReference>
<dbReference type="RefSeq" id="NP_001005618.1">
    <property type="nucleotide sequence ID" value="NM_001005618.1"/>
</dbReference>
<dbReference type="SMR" id="P24802"/>
<dbReference type="FunCoup" id="P24802">
    <property type="interactions" value="123"/>
</dbReference>
<dbReference type="STRING" id="9031.ENSGALP00000007204"/>
<dbReference type="GlyCosmos" id="P24802">
    <property type="glycosylation" value="4 sites, No reported glycans"/>
</dbReference>
<dbReference type="GlyGen" id="P24802">
    <property type="glycosylation" value="4 sites"/>
</dbReference>
<dbReference type="PaxDb" id="9031-ENSGALP00000007204"/>
<dbReference type="GeneID" id="419485"/>
<dbReference type="KEGG" id="gga:419485"/>
<dbReference type="CTD" id="5351"/>
<dbReference type="VEuPathDB" id="HostDB:geneid_419485"/>
<dbReference type="eggNOG" id="KOG1971">
    <property type="taxonomic scope" value="Eukaryota"/>
</dbReference>
<dbReference type="InParanoid" id="P24802"/>
<dbReference type="OrthoDB" id="69177at2759"/>
<dbReference type="PhylomeDB" id="P24802"/>
<dbReference type="PRO" id="PR:P24802"/>
<dbReference type="Proteomes" id="UP000000539">
    <property type="component" value="Unassembled WGS sequence"/>
</dbReference>
<dbReference type="GO" id="GO:0062023">
    <property type="term" value="C:collagen-containing extracellular matrix"/>
    <property type="evidence" value="ECO:0000318"/>
    <property type="project" value="GO_Central"/>
</dbReference>
<dbReference type="GO" id="GO:0005783">
    <property type="term" value="C:endoplasmic reticulum"/>
    <property type="evidence" value="ECO:0000318"/>
    <property type="project" value="GO_Central"/>
</dbReference>
<dbReference type="GO" id="GO:0005615">
    <property type="term" value="C:extracellular space"/>
    <property type="evidence" value="ECO:0000318"/>
    <property type="project" value="GO_Central"/>
</dbReference>
<dbReference type="GO" id="GO:0005794">
    <property type="term" value="C:Golgi apparatus"/>
    <property type="evidence" value="ECO:0000318"/>
    <property type="project" value="GO_Central"/>
</dbReference>
<dbReference type="GO" id="GO:0030867">
    <property type="term" value="C:rough endoplasmic reticulum membrane"/>
    <property type="evidence" value="ECO:0007669"/>
    <property type="project" value="UniProtKB-SubCell"/>
</dbReference>
<dbReference type="GO" id="GO:0005506">
    <property type="term" value="F:iron ion binding"/>
    <property type="evidence" value="ECO:0007669"/>
    <property type="project" value="InterPro"/>
</dbReference>
<dbReference type="GO" id="GO:0031418">
    <property type="term" value="F:L-ascorbic acid binding"/>
    <property type="evidence" value="ECO:0007669"/>
    <property type="project" value="UniProtKB-KW"/>
</dbReference>
<dbReference type="GO" id="GO:0008475">
    <property type="term" value="F:procollagen-lysine 5-dioxygenase activity"/>
    <property type="evidence" value="ECO:0000250"/>
    <property type="project" value="UniProtKB"/>
</dbReference>
<dbReference type="GO" id="GO:0030199">
    <property type="term" value="P:collagen fibril organization"/>
    <property type="evidence" value="ECO:0000318"/>
    <property type="project" value="GO_Central"/>
</dbReference>
<dbReference type="GO" id="GO:0017185">
    <property type="term" value="P:peptidyl-lysine hydroxylation"/>
    <property type="evidence" value="ECO:0000250"/>
    <property type="project" value="UniProtKB"/>
</dbReference>
<dbReference type="CDD" id="cd23004">
    <property type="entry name" value="GT_LH1"/>
    <property type="match status" value="1"/>
</dbReference>
<dbReference type="FunFam" id="2.60.120.620:FF:000004">
    <property type="entry name" value="Procollagen-lysine,2-oxoglutarate 5-dioxygenase 2"/>
    <property type="match status" value="1"/>
</dbReference>
<dbReference type="Gene3D" id="2.60.120.620">
    <property type="entry name" value="q2cbj1_9rhob like domain"/>
    <property type="match status" value="1"/>
</dbReference>
<dbReference type="InterPro" id="IPR050757">
    <property type="entry name" value="Collagen_mod_GT25"/>
</dbReference>
<dbReference type="InterPro" id="IPR044861">
    <property type="entry name" value="IPNS-like_FE2OG_OXY"/>
</dbReference>
<dbReference type="InterPro" id="IPR029044">
    <property type="entry name" value="Nucleotide-diphossugar_trans"/>
</dbReference>
<dbReference type="InterPro" id="IPR005123">
    <property type="entry name" value="Oxoglu/Fe-dep_dioxygenase_dom"/>
</dbReference>
<dbReference type="InterPro" id="IPR006620">
    <property type="entry name" value="Pro_4_hyd_alph"/>
</dbReference>
<dbReference type="InterPro" id="IPR001006">
    <property type="entry name" value="Procol_lys_dOase"/>
</dbReference>
<dbReference type="PANTHER" id="PTHR10730:SF5">
    <property type="entry name" value="PROCOLLAGEN-LYSINE,2-OXOGLUTARATE 5-DIOXYGENASE 1"/>
    <property type="match status" value="1"/>
</dbReference>
<dbReference type="PANTHER" id="PTHR10730">
    <property type="entry name" value="PROCOLLAGEN-LYSINE,2-OXOGLUTARATE 5-DIOXYGENASE/GLYCOSYLTRANSFERASE 25 FAMILY MEMBER"/>
    <property type="match status" value="1"/>
</dbReference>
<dbReference type="Pfam" id="PF03171">
    <property type="entry name" value="2OG-FeII_Oxy"/>
    <property type="match status" value="1"/>
</dbReference>
<dbReference type="Pfam" id="PF25342">
    <property type="entry name" value="GT_PLOD"/>
    <property type="match status" value="1"/>
</dbReference>
<dbReference type="Pfam" id="PF25238">
    <property type="entry name" value="OGFOD2-like"/>
    <property type="match status" value="1"/>
</dbReference>
<dbReference type="SMART" id="SM00702">
    <property type="entry name" value="P4Hc"/>
    <property type="match status" value="1"/>
</dbReference>
<dbReference type="SUPFAM" id="SSF53448">
    <property type="entry name" value="Nucleotide-diphospho-sugar transferases"/>
    <property type="match status" value="1"/>
</dbReference>
<dbReference type="PROSITE" id="PS51471">
    <property type="entry name" value="FE2OG_OXY"/>
    <property type="match status" value="1"/>
</dbReference>
<dbReference type="PROSITE" id="PS01325">
    <property type="entry name" value="LYS_HYDROXYLASE"/>
    <property type="match status" value="1"/>
</dbReference>